<feature type="chain" id="PRO_1000074828" description="Leucine--tRNA ligase">
    <location>
        <begin position="1"/>
        <end position="816"/>
    </location>
</feature>
<feature type="short sequence motif" description="'HIGH' region">
    <location>
        <begin position="40"/>
        <end position="51"/>
    </location>
</feature>
<feature type="short sequence motif" description="'KMSKS' region">
    <location>
        <begin position="576"/>
        <end position="580"/>
    </location>
</feature>
<feature type="binding site" evidence="1">
    <location>
        <position position="579"/>
    </location>
    <ligand>
        <name>ATP</name>
        <dbReference type="ChEBI" id="CHEBI:30616"/>
    </ligand>
</feature>
<proteinExistence type="inferred from homology"/>
<protein>
    <recommendedName>
        <fullName evidence="1">Leucine--tRNA ligase</fullName>
        <ecNumber evidence="1">6.1.1.4</ecNumber>
    </recommendedName>
    <alternativeName>
        <fullName evidence="1">Leucyl-tRNA synthetase</fullName>
        <shortName evidence="1">LeuRS</shortName>
    </alternativeName>
</protein>
<comment type="catalytic activity">
    <reaction evidence="1">
        <text>tRNA(Leu) + L-leucine + ATP = L-leucyl-tRNA(Leu) + AMP + diphosphate</text>
        <dbReference type="Rhea" id="RHEA:11688"/>
        <dbReference type="Rhea" id="RHEA-COMP:9613"/>
        <dbReference type="Rhea" id="RHEA-COMP:9622"/>
        <dbReference type="ChEBI" id="CHEBI:30616"/>
        <dbReference type="ChEBI" id="CHEBI:33019"/>
        <dbReference type="ChEBI" id="CHEBI:57427"/>
        <dbReference type="ChEBI" id="CHEBI:78442"/>
        <dbReference type="ChEBI" id="CHEBI:78494"/>
        <dbReference type="ChEBI" id="CHEBI:456215"/>
        <dbReference type="EC" id="6.1.1.4"/>
    </reaction>
</comment>
<comment type="subcellular location">
    <subcellularLocation>
        <location evidence="1">Cytoplasm</location>
    </subcellularLocation>
</comment>
<comment type="similarity">
    <text evidence="1">Belongs to the class-I aminoacyl-tRNA synthetase family.</text>
</comment>
<name>SYL_CLOB8</name>
<organism>
    <name type="scientific">Clostridium beijerinckii (strain ATCC 51743 / NCIMB 8052)</name>
    <name type="common">Clostridium acetobutylicum</name>
    <dbReference type="NCBI Taxonomy" id="290402"/>
    <lineage>
        <taxon>Bacteria</taxon>
        <taxon>Bacillati</taxon>
        <taxon>Bacillota</taxon>
        <taxon>Clostridia</taxon>
        <taxon>Eubacteriales</taxon>
        <taxon>Clostridiaceae</taxon>
        <taxon>Clostridium</taxon>
    </lineage>
</organism>
<sequence>MANYGTKIDEKWQKFWDENEVYKFNPENSGKKLYTLEMFSYPSGAQLHAGHWFNYGPTDSWARLKRMQGYNVFQPMGFDAFGLPAENYAIKTGIHPQDSTLKNIETMEKQLKSMGAMFNWENEVVTCLPDYYKWTQWLFLKLYEKGLAYRKKAPVNWCPSCNTVLANEQVVDGVCERCSTEVTKKDLTQWFFKITEYGDELLDKLDGLDWPEKTKSMQKHWIGRSYGAEVTFKVKDSDLKFDVFTTRVDTLNGVTYVVLAPENKLVDELTIPEYKAAVEEYKEAAAKQSEIERQSVSKEKTGVFTGSYAINPINGKVVPIWISDYVLATYGTGCVMAVPAHDERDFAFATKFNLPIERVITDKENTNPDLPYCEYGVLVNSGKFDGLTTDEAKKKIVEELEKDELGAMKKNFRLRDWLVSRQRYWGAPIPVIYCDDCGIVPVPEKDLPVKLPYNVEFTPDGKSPLGKCEDFVNTTCPHCGKPAKREADTLDTFVCSSFYYLRYVDNKNDDAPFDSEKVNKMLPVDKYVGGPEHACMHLLYARFITKALRDMGYLNFDEPFLSLTHQGLILGPDGLKMSKSKGNTISPDDYIKEYGADVFRMYLMFGFGYTEGGAWSDDGIKSVGKFVDRIERILENCRNIINSNESTKDSIDSAEKELNFWKHNTIKGVTEDGDKMQFNTAIARLMELTNALNKYTQENIKNANFLKETIVDFIKLLAPFAPHFAEEQWSLLGNNSTIFNEKWPEFNPAALVKDEVEIAIQINGKIKAKIMVASNLDEEGIKAASLENETIKENTEGKTIVKVIVIKGRLVNIVVK</sequence>
<evidence type="ECO:0000255" key="1">
    <source>
        <dbReference type="HAMAP-Rule" id="MF_00049"/>
    </source>
</evidence>
<keyword id="KW-0030">Aminoacyl-tRNA synthetase</keyword>
<keyword id="KW-0067">ATP-binding</keyword>
<keyword id="KW-0963">Cytoplasm</keyword>
<keyword id="KW-0436">Ligase</keyword>
<keyword id="KW-0547">Nucleotide-binding</keyword>
<keyword id="KW-0648">Protein biosynthesis</keyword>
<reference key="1">
    <citation type="submission" date="2007-06" db="EMBL/GenBank/DDBJ databases">
        <title>Complete sequence of Clostridium beijerinckii NCIMB 8052.</title>
        <authorList>
            <consortium name="US DOE Joint Genome Institute"/>
            <person name="Copeland A."/>
            <person name="Lucas S."/>
            <person name="Lapidus A."/>
            <person name="Barry K."/>
            <person name="Detter J.C."/>
            <person name="Glavina del Rio T."/>
            <person name="Hammon N."/>
            <person name="Israni S."/>
            <person name="Dalin E."/>
            <person name="Tice H."/>
            <person name="Pitluck S."/>
            <person name="Sims D."/>
            <person name="Brettin T."/>
            <person name="Bruce D."/>
            <person name="Tapia R."/>
            <person name="Brainard J."/>
            <person name="Schmutz J."/>
            <person name="Larimer F."/>
            <person name="Land M."/>
            <person name="Hauser L."/>
            <person name="Kyrpides N."/>
            <person name="Mikhailova N."/>
            <person name="Bennet G."/>
            <person name="Cann I."/>
            <person name="Chen J.-S."/>
            <person name="Contreras A.L."/>
            <person name="Jones D."/>
            <person name="Kashket E."/>
            <person name="Mitchell W."/>
            <person name="Stoddard S."/>
            <person name="Schwarz W."/>
            <person name="Qureshi N."/>
            <person name="Young M."/>
            <person name="Shi Z."/>
            <person name="Ezeji T."/>
            <person name="White B."/>
            <person name="Blaschek H."/>
            <person name="Richardson P."/>
        </authorList>
    </citation>
    <scope>NUCLEOTIDE SEQUENCE [LARGE SCALE GENOMIC DNA]</scope>
    <source>
        <strain>ATCC 51743 / NCIMB 8052</strain>
    </source>
</reference>
<dbReference type="EC" id="6.1.1.4" evidence="1"/>
<dbReference type="EMBL" id="CP000721">
    <property type="protein sequence ID" value="ABR36698.1"/>
    <property type="molecule type" value="Genomic_DNA"/>
</dbReference>
<dbReference type="RefSeq" id="WP_012060745.1">
    <property type="nucleotide sequence ID" value="NC_009617.1"/>
</dbReference>
<dbReference type="SMR" id="A6M268"/>
<dbReference type="KEGG" id="cbe:Cbei_4590"/>
<dbReference type="eggNOG" id="COG0495">
    <property type="taxonomic scope" value="Bacteria"/>
</dbReference>
<dbReference type="HOGENOM" id="CLU_004427_0_0_9"/>
<dbReference type="Proteomes" id="UP000000565">
    <property type="component" value="Chromosome"/>
</dbReference>
<dbReference type="GO" id="GO:0005829">
    <property type="term" value="C:cytosol"/>
    <property type="evidence" value="ECO:0007669"/>
    <property type="project" value="TreeGrafter"/>
</dbReference>
<dbReference type="GO" id="GO:0002161">
    <property type="term" value="F:aminoacyl-tRNA deacylase activity"/>
    <property type="evidence" value="ECO:0007669"/>
    <property type="project" value="InterPro"/>
</dbReference>
<dbReference type="GO" id="GO:0005524">
    <property type="term" value="F:ATP binding"/>
    <property type="evidence" value="ECO:0007669"/>
    <property type="project" value="UniProtKB-UniRule"/>
</dbReference>
<dbReference type="GO" id="GO:0004823">
    <property type="term" value="F:leucine-tRNA ligase activity"/>
    <property type="evidence" value="ECO:0007669"/>
    <property type="project" value="UniProtKB-UniRule"/>
</dbReference>
<dbReference type="GO" id="GO:0006429">
    <property type="term" value="P:leucyl-tRNA aminoacylation"/>
    <property type="evidence" value="ECO:0007669"/>
    <property type="project" value="UniProtKB-UniRule"/>
</dbReference>
<dbReference type="CDD" id="cd07958">
    <property type="entry name" value="Anticodon_Ia_Leu_BEm"/>
    <property type="match status" value="1"/>
</dbReference>
<dbReference type="CDD" id="cd00812">
    <property type="entry name" value="LeuRS_core"/>
    <property type="match status" value="1"/>
</dbReference>
<dbReference type="FunFam" id="1.10.730.10:FF:000002">
    <property type="entry name" value="Leucine--tRNA ligase"/>
    <property type="match status" value="1"/>
</dbReference>
<dbReference type="FunFam" id="3.40.50.620:FF:000003">
    <property type="entry name" value="Leucine--tRNA ligase"/>
    <property type="match status" value="1"/>
</dbReference>
<dbReference type="FunFam" id="3.40.50.620:FF:000056">
    <property type="entry name" value="Leucine--tRNA ligase"/>
    <property type="match status" value="1"/>
</dbReference>
<dbReference type="Gene3D" id="3.10.20.590">
    <property type="match status" value="1"/>
</dbReference>
<dbReference type="Gene3D" id="3.40.50.620">
    <property type="entry name" value="HUPs"/>
    <property type="match status" value="2"/>
</dbReference>
<dbReference type="Gene3D" id="1.10.730.10">
    <property type="entry name" value="Isoleucyl-tRNA Synthetase, Domain 1"/>
    <property type="match status" value="1"/>
</dbReference>
<dbReference type="HAMAP" id="MF_00049_B">
    <property type="entry name" value="Leu_tRNA_synth_B"/>
    <property type="match status" value="1"/>
</dbReference>
<dbReference type="InterPro" id="IPR002302">
    <property type="entry name" value="Leu-tRNA-ligase"/>
</dbReference>
<dbReference type="InterPro" id="IPR025709">
    <property type="entry name" value="Leu_tRNA-synth_edit"/>
</dbReference>
<dbReference type="InterPro" id="IPR013155">
    <property type="entry name" value="M/V/L/I-tRNA-synth_anticd-bd"/>
</dbReference>
<dbReference type="InterPro" id="IPR015413">
    <property type="entry name" value="Methionyl/Leucyl_tRNA_Synth"/>
</dbReference>
<dbReference type="InterPro" id="IPR014729">
    <property type="entry name" value="Rossmann-like_a/b/a_fold"/>
</dbReference>
<dbReference type="InterPro" id="IPR009080">
    <property type="entry name" value="tRNAsynth_Ia_anticodon-bd"/>
</dbReference>
<dbReference type="InterPro" id="IPR009008">
    <property type="entry name" value="Val/Leu/Ile-tRNA-synth_edit"/>
</dbReference>
<dbReference type="NCBIfam" id="TIGR00396">
    <property type="entry name" value="leuS_bact"/>
    <property type="match status" value="1"/>
</dbReference>
<dbReference type="PANTHER" id="PTHR43740:SF2">
    <property type="entry name" value="LEUCINE--TRNA LIGASE, MITOCHONDRIAL"/>
    <property type="match status" value="1"/>
</dbReference>
<dbReference type="PANTHER" id="PTHR43740">
    <property type="entry name" value="LEUCYL-TRNA SYNTHETASE"/>
    <property type="match status" value="1"/>
</dbReference>
<dbReference type="Pfam" id="PF08264">
    <property type="entry name" value="Anticodon_1"/>
    <property type="match status" value="1"/>
</dbReference>
<dbReference type="Pfam" id="PF13603">
    <property type="entry name" value="tRNA-synt_1_2"/>
    <property type="match status" value="1"/>
</dbReference>
<dbReference type="Pfam" id="PF09334">
    <property type="entry name" value="tRNA-synt_1g"/>
    <property type="match status" value="2"/>
</dbReference>
<dbReference type="PRINTS" id="PR00985">
    <property type="entry name" value="TRNASYNTHLEU"/>
</dbReference>
<dbReference type="SUPFAM" id="SSF47323">
    <property type="entry name" value="Anticodon-binding domain of a subclass of class I aminoacyl-tRNA synthetases"/>
    <property type="match status" value="1"/>
</dbReference>
<dbReference type="SUPFAM" id="SSF52374">
    <property type="entry name" value="Nucleotidylyl transferase"/>
    <property type="match status" value="1"/>
</dbReference>
<dbReference type="SUPFAM" id="SSF50677">
    <property type="entry name" value="ValRS/IleRS/LeuRS editing domain"/>
    <property type="match status" value="1"/>
</dbReference>
<accession>A6M268</accession>
<gene>
    <name evidence="1" type="primary">leuS</name>
    <name type="ordered locus">Cbei_4590</name>
</gene>